<protein>
    <recommendedName>
        <fullName>Uncharacterized protein YCL048W-A</fullName>
    </recommendedName>
</protein>
<feature type="signal peptide" evidence="1">
    <location>
        <begin position="1"/>
        <end position="18"/>
    </location>
</feature>
<feature type="chain" id="PRO_0000248449" description="Uncharacterized protein YCL048W-A">
    <location>
        <begin position="19"/>
        <end position="55"/>
    </location>
</feature>
<feature type="propeptide" id="PRO_0000253885" description="Removed in mature form" evidence="1">
    <location>
        <begin position="56"/>
        <end position="79"/>
    </location>
</feature>
<feature type="region of interest" description="Disordered" evidence="2">
    <location>
        <begin position="24"/>
        <end position="44"/>
    </location>
</feature>
<feature type="lipid moiety-binding region" description="GPI-anchor amidated glycine" evidence="1">
    <location>
        <position position="55"/>
    </location>
</feature>
<feature type="glycosylation site" description="N-linked (GlcNAc...) asparagine" evidence="1">
    <location>
        <position position="25"/>
    </location>
</feature>
<feature type="glycosylation site" description="N-linked (GlcNAc...) asparagine" evidence="1">
    <location>
        <position position="30"/>
    </location>
</feature>
<feature type="glycosylation site" description="N-linked (GlcNAc...) asparagine" evidence="1">
    <location>
        <position position="35"/>
    </location>
</feature>
<feature type="glycosylation site" description="N-linked (GlcNAc...) asparagine" evidence="1">
    <location>
        <position position="40"/>
    </location>
</feature>
<sequence>MQIKNIVAVLATVTAINAQVGIEPNATTPNATQPNATQPNTTLPTASVTTTVSIGEAVVNTMAAGAFGAAIAAGVAFLF</sequence>
<keyword id="KW-1003">Cell membrane</keyword>
<keyword id="KW-0325">Glycoprotein</keyword>
<keyword id="KW-0336">GPI-anchor</keyword>
<keyword id="KW-0449">Lipoprotein</keyword>
<keyword id="KW-0472">Membrane</keyword>
<keyword id="KW-1185">Reference proteome</keyword>
<keyword id="KW-0732">Signal</keyword>
<proteinExistence type="inferred from homology"/>
<name>YC048_YEAST</name>
<comment type="subcellular location">
    <subcellularLocation>
        <location evidence="3">Cell membrane</location>
        <topology evidence="3">Lipid-anchor</topology>
        <topology evidence="3">GPI-anchor</topology>
    </subcellularLocation>
</comment>
<gene>
    <name type="ordered locus">YCL048W-A</name>
</gene>
<evidence type="ECO:0000255" key="1"/>
<evidence type="ECO:0000256" key="2">
    <source>
        <dbReference type="SAM" id="MobiDB-lite"/>
    </source>
</evidence>
<evidence type="ECO:0000305" key="3"/>
<accession>Q2V2Q2</accession>
<accession>D6VQW8</accession>
<dbReference type="EMBL" id="X59720">
    <property type="status" value="NOT_ANNOTATED_CDS"/>
    <property type="molecule type" value="Genomic_DNA"/>
</dbReference>
<dbReference type="EMBL" id="BK006937">
    <property type="protein sequence ID" value="DAA07437.1"/>
    <property type="molecule type" value="Genomic_DNA"/>
</dbReference>
<dbReference type="RefSeq" id="NP_001032573.1">
    <property type="nucleotide sequence ID" value="NM_001184678.1"/>
</dbReference>
<dbReference type="BioGRID" id="531939">
    <property type="interactions" value="1"/>
</dbReference>
<dbReference type="FunCoup" id="Q2V2Q2">
    <property type="interactions" value="9"/>
</dbReference>
<dbReference type="STRING" id="4932.YCL048W-A"/>
<dbReference type="GlyGen" id="Q2V2Q2">
    <property type="glycosylation" value="4 sites"/>
</dbReference>
<dbReference type="PaxDb" id="4932-YCL048W-A"/>
<dbReference type="EnsemblFungi" id="YCL048W-A_mRNA">
    <property type="protein sequence ID" value="YCL048W-A"/>
    <property type="gene ID" value="YCL048W-A"/>
</dbReference>
<dbReference type="GeneID" id="3799968"/>
<dbReference type="KEGG" id="sce:YCL048W-A"/>
<dbReference type="AGR" id="SGD:S000087203"/>
<dbReference type="SGD" id="S000087203">
    <property type="gene designation" value="YCL048W-A"/>
</dbReference>
<dbReference type="VEuPathDB" id="FungiDB:YCL048W-A"/>
<dbReference type="HOGENOM" id="CLU_149546_0_1_1"/>
<dbReference type="InParanoid" id="Q2V2Q2"/>
<dbReference type="BioCyc" id="YEAST:G3O-29431-MONOMER"/>
<dbReference type="BioGRID-ORCS" id="3799968">
    <property type="hits" value="8 hits in 10 CRISPR screens"/>
</dbReference>
<dbReference type="PRO" id="PR:Q2V2Q2"/>
<dbReference type="Proteomes" id="UP000002311">
    <property type="component" value="Chromosome III"/>
</dbReference>
<dbReference type="RNAct" id="Q2V2Q2">
    <property type="molecule type" value="protein"/>
</dbReference>
<dbReference type="GO" id="GO:0071944">
    <property type="term" value="C:cell periphery"/>
    <property type="evidence" value="ECO:0007005"/>
    <property type="project" value="SGD"/>
</dbReference>
<dbReference type="GO" id="GO:0000324">
    <property type="term" value="C:fungal-type vacuole"/>
    <property type="evidence" value="ECO:0007005"/>
    <property type="project" value="SGD"/>
</dbReference>
<dbReference type="GO" id="GO:0005886">
    <property type="term" value="C:plasma membrane"/>
    <property type="evidence" value="ECO:0007669"/>
    <property type="project" value="UniProtKB-SubCell"/>
</dbReference>
<dbReference type="GO" id="GO:0098552">
    <property type="term" value="C:side of membrane"/>
    <property type="evidence" value="ECO:0007669"/>
    <property type="project" value="UniProtKB-KW"/>
</dbReference>
<reference key="1">
    <citation type="journal article" date="1992" name="Nature">
        <title>The complete DNA sequence of yeast chromosome III.</title>
        <authorList>
            <person name="Oliver S.G."/>
            <person name="van der Aart Q.J.M."/>
            <person name="Agostoni-Carbone M.L."/>
            <person name="Aigle M."/>
            <person name="Alberghina L."/>
            <person name="Alexandraki D."/>
            <person name="Antoine G."/>
            <person name="Anwar R."/>
            <person name="Ballesta J.P.G."/>
            <person name="Benit P."/>
            <person name="Berben G."/>
            <person name="Bergantino E."/>
            <person name="Biteau N."/>
            <person name="Bolle P.-A."/>
            <person name="Bolotin-Fukuhara M."/>
            <person name="Brown A."/>
            <person name="Brown A.J.P."/>
            <person name="Buhler J.-M."/>
            <person name="Carcano C."/>
            <person name="Carignani G."/>
            <person name="Cederberg H."/>
            <person name="Chanet R."/>
            <person name="Contreras R."/>
            <person name="Crouzet M."/>
            <person name="Daignan-Fornier B."/>
            <person name="Defoor E."/>
            <person name="Delgado M.D."/>
            <person name="Demolder J."/>
            <person name="Doira C."/>
            <person name="Dubois E."/>
            <person name="Dujon B."/>
            <person name="Duesterhoeft A."/>
            <person name="Erdmann D."/>
            <person name="Esteban M."/>
            <person name="Fabre F."/>
            <person name="Fairhead C."/>
            <person name="Faye G."/>
            <person name="Feldmann H."/>
            <person name="Fiers W."/>
            <person name="Francingues-Gaillard M.-C."/>
            <person name="Franco L."/>
            <person name="Frontali L."/>
            <person name="Fukuhara H."/>
            <person name="Fuller L.J."/>
            <person name="Galland P."/>
            <person name="Gent M.E."/>
            <person name="Gigot D."/>
            <person name="Gilliquet V."/>
            <person name="Glansdorff N."/>
            <person name="Goffeau A."/>
            <person name="Grenson M."/>
            <person name="Grisanti P."/>
            <person name="Grivell L.A."/>
            <person name="de Haan M."/>
            <person name="Haasemann M."/>
            <person name="Hatat D."/>
            <person name="Hoenicka J."/>
            <person name="Hegemann J.H."/>
            <person name="Herbert C.J."/>
            <person name="Hilger F."/>
            <person name="Hohmann S."/>
            <person name="Hollenberg C.P."/>
            <person name="Huse K."/>
            <person name="Iborra F."/>
            <person name="Indge K.J."/>
            <person name="Isono K."/>
            <person name="Jacq C."/>
            <person name="Jacquet M."/>
            <person name="James C.M."/>
            <person name="Jauniaux J.-C."/>
            <person name="Jia Y."/>
            <person name="Jimenez A."/>
            <person name="Kelly A."/>
            <person name="Kleinhans U."/>
            <person name="Kreisl P."/>
            <person name="Lanfranchi G."/>
            <person name="Lewis C."/>
            <person name="van der Linden C.G."/>
            <person name="Lucchini G."/>
            <person name="Lutzenkirchen K."/>
            <person name="Maat M.J."/>
            <person name="Mallet L."/>
            <person name="Mannhaupt G."/>
            <person name="Martegani E."/>
            <person name="Mathieu A."/>
            <person name="Maurer C.T.C."/>
            <person name="McConnell D."/>
            <person name="McKee R.A."/>
            <person name="Messenguy F."/>
            <person name="Mewes H.-W."/>
            <person name="Molemans F."/>
            <person name="Montague M.A."/>
            <person name="Muzi Falconi M."/>
            <person name="Navas L."/>
            <person name="Newlon C.S."/>
            <person name="Noone D."/>
            <person name="Pallier C."/>
            <person name="Panzeri L."/>
            <person name="Pearson B.M."/>
            <person name="Perea J."/>
            <person name="Philippsen P."/>
            <person name="Pierard A."/>
            <person name="Planta R.J."/>
            <person name="Plevani P."/>
            <person name="Poetsch B."/>
            <person name="Pohl F.M."/>
            <person name="Purnelle B."/>
            <person name="Ramezani Rad M."/>
            <person name="Rasmussen S.W."/>
            <person name="Raynal A."/>
            <person name="Remacha M.A."/>
            <person name="Richterich P."/>
            <person name="Roberts A.B."/>
            <person name="Rodriguez F."/>
            <person name="Sanz E."/>
            <person name="Schaaff-Gerstenschlaeger I."/>
            <person name="Scherens B."/>
            <person name="Schweitzer B."/>
            <person name="Shu Y."/>
            <person name="Skala J."/>
            <person name="Slonimski P.P."/>
            <person name="Sor F."/>
            <person name="Soustelle C."/>
            <person name="Spiegelberg R."/>
            <person name="Stateva L.I."/>
            <person name="Steensma H.Y."/>
            <person name="Steiner S."/>
            <person name="Thierry A."/>
            <person name="Thireos G."/>
            <person name="Tzermia M."/>
            <person name="Urrestarazu L.A."/>
            <person name="Valle G."/>
            <person name="Vetter I."/>
            <person name="van Vliet-Reedijk J.C."/>
            <person name="Voet M."/>
            <person name="Volckaert G."/>
            <person name="Vreken P."/>
            <person name="Wang H."/>
            <person name="Warmington J.R."/>
            <person name="von Wettstein D."/>
            <person name="Wicksteed B.L."/>
            <person name="Wilson C."/>
            <person name="Wurst H."/>
            <person name="Xu G."/>
            <person name="Yoshikawa A."/>
            <person name="Zimmermann F.K."/>
            <person name="Sgouros J.G."/>
        </authorList>
    </citation>
    <scope>NUCLEOTIDE SEQUENCE [LARGE SCALE GENOMIC DNA]</scope>
    <source>
        <strain>ATCC 204508 / S288c</strain>
    </source>
</reference>
<reference key="2">
    <citation type="journal article" date="2014" name="G3 (Bethesda)">
        <title>The reference genome sequence of Saccharomyces cerevisiae: Then and now.</title>
        <authorList>
            <person name="Engel S.R."/>
            <person name="Dietrich F.S."/>
            <person name="Fisk D.G."/>
            <person name="Binkley G."/>
            <person name="Balakrishnan R."/>
            <person name="Costanzo M.C."/>
            <person name="Dwight S.S."/>
            <person name="Hitz B.C."/>
            <person name="Karra K."/>
            <person name="Nash R.S."/>
            <person name="Weng S."/>
            <person name="Wong E.D."/>
            <person name="Lloyd P."/>
            <person name="Skrzypek M.S."/>
            <person name="Miyasato S.R."/>
            <person name="Simison M."/>
            <person name="Cherry J.M."/>
        </authorList>
    </citation>
    <scope>GENOME REANNOTATION</scope>
    <source>
        <strain>ATCC 204508 / S288c</strain>
    </source>
</reference>
<organism>
    <name type="scientific">Saccharomyces cerevisiae (strain ATCC 204508 / S288c)</name>
    <name type="common">Baker's yeast</name>
    <dbReference type="NCBI Taxonomy" id="559292"/>
    <lineage>
        <taxon>Eukaryota</taxon>
        <taxon>Fungi</taxon>
        <taxon>Dikarya</taxon>
        <taxon>Ascomycota</taxon>
        <taxon>Saccharomycotina</taxon>
        <taxon>Saccharomycetes</taxon>
        <taxon>Saccharomycetales</taxon>
        <taxon>Saccharomycetaceae</taxon>
        <taxon>Saccharomyces</taxon>
    </lineage>
</organism>